<protein>
    <recommendedName>
        <fullName evidence="5">Class II hydrophobin 3</fullName>
    </recommendedName>
</protein>
<dbReference type="EMBL" id="CP009810">
    <property type="protein sequence ID" value="ATZ50554.1"/>
    <property type="molecule type" value="Genomic_DNA"/>
</dbReference>
<dbReference type="RefSeq" id="XP_001560180.1">
    <property type="nucleotide sequence ID" value="XM_001560130.2"/>
</dbReference>
<dbReference type="EnsemblFungi" id="Bcin06g00510.1">
    <property type="protein sequence ID" value="Bcin06p00510.1"/>
    <property type="gene ID" value="Bcin06g00510"/>
</dbReference>
<dbReference type="GeneID" id="5440838"/>
<dbReference type="KEGG" id="bfu:BCIN_06g00510"/>
<dbReference type="VEuPathDB" id="FungiDB:Bcin06g00510"/>
<dbReference type="OMA" id="LCETPTG"/>
<dbReference type="OrthoDB" id="4500971at2759"/>
<dbReference type="Proteomes" id="UP000001798">
    <property type="component" value="Chromosome bcin06"/>
</dbReference>
<dbReference type="GO" id="GO:0005576">
    <property type="term" value="C:extracellular region"/>
    <property type="evidence" value="ECO:0007669"/>
    <property type="project" value="UniProtKB-SubCell"/>
</dbReference>
<dbReference type="CDD" id="cd23508">
    <property type="entry name" value="hydrophobin_II"/>
    <property type="match status" value="1"/>
</dbReference>
<dbReference type="Gene3D" id="3.20.120.10">
    <property type="entry name" value="Hydrophobin"/>
    <property type="match status" value="1"/>
</dbReference>
<dbReference type="InterPro" id="IPR010636">
    <property type="entry name" value="Cerato-ulmin_hydrophobin"/>
</dbReference>
<dbReference type="InterPro" id="IPR036686">
    <property type="entry name" value="Hydrophobin_sf"/>
</dbReference>
<dbReference type="PANTHER" id="PTHR42341">
    <property type="entry name" value="HYDROPHOBIN"/>
    <property type="match status" value="1"/>
</dbReference>
<dbReference type="PANTHER" id="PTHR42341:SF2">
    <property type="entry name" value="HYDROPHOBIN"/>
    <property type="match status" value="1"/>
</dbReference>
<dbReference type="Pfam" id="PF06766">
    <property type="entry name" value="Hydrophobin_2"/>
    <property type="match status" value="1"/>
</dbReference>
<dbReference type="SUPFAM" id="SSF101751">
    <property type="entry name" value="Hydrophobin II, HfbII"/>
    <property type="match status" value="1"/>
</dbReference>
<name>BHP3_BOTFB</name>
<keyword id="KW-0134">Cell wall</keyword>
<keyword id="KW-1015">Disulfide bond</keyword>
<keyword id="KW-0325">Glycoprotein</keyword>
<keyword id="KW-1185">Reference proteome</keyword>
<keyword id="KW-0964">Secreted</keyword>
<keyword id="KW-0732">Signal</keyword>
<sequence length="98" mass="10223">MQFTTTTLIAILSALAVASPIEPRQNATAQQERLCTSAIDTAMCCQTTLAGVINQTCTTPAITPINKQAFRAYCAAQGQDSSCCKTPLVGDGVICTPP</sequence>
<organism>
    <name type="scientific">Botryotinia fuckeliana (strain B05.10)</name>
    <name type="common">Noble rot fungus</name>
    <name type="synonym">Botrytis cinerea</name>
    <dbReference type="NCBI Taxonomy" id="332648"/>
    <lineage>
        <taxon>Eukaryota</taxon>
        <taxon>Fungi</taxon>
        <taxon>Dikarya</taxon>
        <taxon>Ascomycota</taxon>
        <taxon>Pezizomycotina</taxon>
        <taxon>Leotiomycetes</taxon>
        <taxon>Helotiales</taxon>
        <taxon>Sclerotiniaceae</taxon>
        <taxon>Botrytis</taxon>
    </lineage>
</organism>
<feature type="signal peptide" evidence="2">
    <location>
        <begin position="1"/>
        <end position="18"/>
    </location>
</feature>
<feature type="chain" id="PRO_5016781419" description="Class II hydrophobin 3" evidence="2">
    <location>
        <begin position="19"/>
        <end position="98"/>
    </location>
</feature>
<feature type="glycosylation site" description="N-linked (GlcNAc...) asparagine" evidence="3">
    <location>
        <position position="26"/>
    </location>
</feature>
<feature type="glycosylation site" description="N-linked (GlcNAc...) asparagine" evidence="3">
    <location>
        <position position="54"/>
    </location>
</feature>
<feature type="disulfide bond" evidence="1">
    <location>
        <begin position="35"/>
        <end position="83"/>
    </location>
</feature>
<feature type="disulfide bond" evidence="1">
    <location>
        <begin position="44"/>
        <end position="74"/>
    </location>
</feature>
<feature type="disulfide bond" evidence="1">
    <location>
        <begin position="45"/>
        <end position="57"/>
    </location>
</feature>
<feature type="disulfide bond" evidence="1">
    <location>
        <begin position="84"/>
        <end position="95"/>
    </location>
</feature>
<accession>A0A384JJM8</accession>
<reference key="1">
    <citation type="journal article" date="2011" name="PLoS Genet.">
        <title>Genomic analysis of the necrotrophic fungal pathogens Sclerotinia sclerotiorum and Botrytis cinerea.</title>
        <authorList>
            <person name="Amselem J."/>
            <person name="Cuomo C.A."/>
            <person name="van Kan J.A.L."/>
            <person name="Viaud M."/>
            <person name="Benito E.P."/>
            <person name="Couloux A."/>
            <person name="Coutinho P.M."/>
            <person name="de Vries R.P."/>
            <person name="Dyer P.S."/>
            <person name="Fillinger S."/>
            <person name="Fournier E."/>
            <person name="Gout L."/>
            <person name="Hahn M."/>
            <person name="Kohn L."/>
            <person name="Lapalu N."/>
            <person name="Plummer K.M."/>
            <person name="Pradier J.-M."/>
            <person name="Quevillon E."/>
            <person name="Sharon A."/>
            <person name="Simon A."/>
            <person name="ten Have A."/>
            <person name="Tudzynski B."/>
            <person name="Tudzynski P."/>
            <person name="Wincker P."/>
            <person name="Andrew M."/>
            <person name="Anthouard V."/>
            <person name="Beever R.E."/>
            <person name="Beffa R."/>
            <person name="Benoit I."/>
            <person name="Bouzid O."/>
            <person name="Brault B."/>
            <person name="Chen Z."/>
            <person name="Choquer M."/>
            <person name="Collemare J."/>
            <person name="Cotton P."/>
            <person name="Danchin E.G."/>
            <person name="Da Silva C."/>
            <person name="Gautier A."/>
            <person name="Giraud C."/>
            <person name="Giraud T."/>
            <person name="Gonzalez C."/>
            <person name="Grossetete S."/>
            <person name="Gueldener U."/>
            <person name="Henrissat B."/>
            <person name="Howlett B.J."/>
            <person name="Kodira C."/>
            <person name="Kretschmer M."/>
            <person name="Lappartient A."/>
            <person name="Leroch M."/>
            <person name="Levis C."/>
            <person name="Mauceli E."/>
            <person name="Neuveglise C."/>
            <person name="Oeser B."/>
            <person name="Pearson M."/>
            <person name="Poulain J."/>
            <person name="Poussereau N."/>
            <person name="Quesneville H."/>
            <person name="Rascle C."/>
            <person name="Schumacher J."/>
            <person name="Segurens B."/>
            <person name="Sexton A."/>
            <person name="Silva E."/>
            <person name="Sirven C."/>
            <person name="Soanes D.M."/>
            <person name="Talbot N.J."/>
            <person name="Templeton M."/>
            <person name="Yandava C."/>
            <person name="Yarden O."/>
            <person name="Zeng Q."/>
            <person name="Rollins J.A."/>
            <person name="Lebrun M.-H."/>
            <person name="Dickman M."/>
        </authorList>
    </citation>
    <scope>NUCLEOTIDE SEQUENCE [LARGE SCALE GENOMIC DNA]</scope>
    <source>
        <strain>B05.10</strain>
    </source>
</reference>
<reference key="2">
    <citation type="journal article" date="2012" name="Eukaryot. Cell">
        <title>Genome update of Botrytis cinerea strains B05.10 and T4.</title>
        <authorList>
            <person name="Staats M."/>
            <person name="van Kan J.A.L."/>
        </authorList>
    </citation>
    <scope>NUCLEOTIDE SEQUENCE [LARGE SCALE GENOMIC DNA]</scope>
    <source>
        <strain>B05.10</strain>
    </source>
</reference>
<reference key="3">
    <citation type="journal article" date="2017" name="Mol. Plant Pathol.">
        <title>A gapless genome sequence of the fungus Botrytis cinerea.</title>
        <authorList>
            <person name="van Kan J.A.L."/>
            <person name="Stassen J.H.M."/>
            <person name="Mosbach A."/>
            <person name="van der Lee T.A.J."/>
            <person name="Faino L."/>
            <person name="Farmer A.D."/>
            <person name="Papasotiriou D.G."/>
            <person name="Zhou S."/>
            <person name="Seidl M.F."/>
            <person name="Cottam E."/>
            <person name="Edel D."/>
            <person name="Hahn M."/>
            <person name="Schwartz D.C."/>
            <person name="Dietrich R.A."/>
            <person name="Widdison S."/>
            <person name="Scalliet G."/>
        </authorList>
    </citation>
    <scope>NUCLEOTIDE SEQUENCE [LARGE SCALE GENOMIC DNA]</scope>
    <source>
        <strain>B05.10</strain>
    </source>
</reference>
<reference key="4">
    <citation type="journal article" date="2011" name="BMC Microbiol.">
        <title>Lack of evidence for a role of hydrophobins in conferring surface hydrophobicity to conidia and hyphae of Botrytis cinerea.</title>
        <authorList>
            <person name="Mosbach A."/>
            <person name="Leroch M."/>
            <person name="Mendgen K.W."/>
            <person name="Hahn M."/>
        </authorList>
    </citation>
    <scope>FUNCTION</scope>
    <scope>DISRUPTION PHENOTYPE</scope>
</reference>
<comment type="function">
    <text evidence="4 7">Aerial growth, conidiation, and dispersal of filamentous fungi in the environment rely upon a capability of their secreting small amphipathic proteins called hydrophobins (HPBs) with low sequence identity. Class I can self-assemble into an outermost layer of rodlet bundles on aerial cell surfaces, conferring cellular hydrophobicity that supports fungal growth, development and dispersal; whereas Class II form highly ordered films at water-air interfaces through intermolecular interactions but contribute nothing to the rodlet structure (Probable). In Botryotinia fuckeliana, hydrophobins are not involved in conferring surface hydrophobicity to conidia and aerial hyphae and their function in sclerotia and fruiting bodies remains to be investigated (PubMed:21232149).</text>
</comment>
<comment type="subcellular location">
    <subcellularLocation>
        <location evidence="7">Secreted</location>
    </subcellularLocation>
    <subcellularLocation>
        <location evidence="7">Secreted</location>
        <location evidence="7">Cell wall</location>
    </subcellularLocation>
</comment>
<comment type="disruption phenotype">
    <text evidence="4">Does not seem to affect germination and growth, formation of sclerotia, ability to penetrate and infect host tissue, nor spore and mycelium surface properties.</text>
</comment>
<comment type="similarity">
    <text evidence="6">Belongs to the cerato-ulmin hydrophobin family.</text>
</comment>
<gene>
    <name evidence="5" type="primary">Bhp3</name>
    <name type="ORF">BCIN_06g00510</name>
</gene>
<evidence type="ECO:0000250" key="1">
    <source>
        <dbReference type="UniProtKB" id="P52754"/>
    </source>
</evidence>
<evidence type="ECO:0000255" key="2"/>
<evidence type="ECO:0000255" key="3">
    <source>
        <dbReference type="PROSITE-ProRule" id="PRU00498"/>
    </source>
</evidence>
<evidence type="ECO:0000269" key="4">
    <source>
    </source>
</evidence>
<evidence type="ECO:0000303" key="5">
    <source>
    </source>
</evidence>
<evidence type="ECO:0000305" key="6"/>
<evidence type="ECO:0000305" key="7">
    <source>
    </source>
</evidence>
<proteinExistence type="inferred from homology"/>